<dbReference type="EMBL" id="AK023331">
    <property type="protein sequence ID" value="BAB14530.1"/>
    <property type="molecule type" value="mRNA"/>
</dbReference>
<dbReference type="EMBL" id="AK296653">
    <property type="protein sequence ID" value="BAG59250.1"/>
    <property type="molecule type" value="mRNA"/>
</dbReference>
<dbReference type="EMBL" id="AK298766">
    <property type="protein sequence ID" value="BAG60908.1"/>
    <property type="molecule type" value="mRNA"/>
</dbReference>
<dbReference type="EMBL" id="AK300293">
    <property type="protein sequence ID" value="BAG62050.1"/>
    <property type="molecule type" value="mRNA"/>
</dbReference>
<dbReference type="EMBL" id="AL136695">
    <property type="protein sequence ID" value="CAB66630.1"/>
    <property type="molecule type" value="mRNA"/>
</dbReference>
<dbReference type="EMBL" id="CR457311">
    <property type="protein sequence ID" value="CAG33592.1"/>
    <property type="molecule type" value="mRNA"/>
</dbReference>
<dbReference type="EMBL" id="CR533536">
    <property type="protein sequence ID" value="CAG38567.1"/>
    <property type="molecule type" value="mRNA"/>
</dbReference>
<dbReference type="EMBL" id="AL445248">
    <property type="status" value="NOT_ANNOTATED_CDS"/>
    <property type="molecule type" value="Genomic_DNA"/>
</dbReference>
<dbReference type="EMBL" id="CH471059">
    <property type="protein sequence ID" value="EAX07570.1"/>
    <property type="molecule type" value="Genomic_DNA"/>
</dbReference>
<dbReference type="EMBL" id="CH471059">
    <property type="protein sequence ID" value="EAX07571.1"/>
    <property type="molecule type" value="Genomic_DNA"/>
</dbReference>
<dbReference type="EMBL" id="CH471059">
    <property type="protein sequence ID" value="EAX07573.1"/>
    <property type="molecule type" value="Genomic_DNA"/>
</dbReference>
<dbReference type="CCDS" id="CCDS351.2">
    <molecule id="Q9GZU3-1"/>
</dbReference>
<dbReference type="RefSeq" id="NP_001306606.1">
    <property type="nucleotide sequence ID" value="NM_001319677.1"/>
</dbReference>
<dbReference type="RefSeq" id="NP_001306607.1">
    <molecule id="Q9GZU3-4"/>
    <property type="nucleotide sequence ID" value="NM_001319678.2"/>
</dbReference>
<dbReference type="RefSeq" id="NP_001306608.1">
    <molecule id="Q9GZU3-4"/>
    <property type="nucleotide sequence ID" value="NM_001319679.2"/>
</dbReference>
<dbReference type="RefSeq" id="NP_060526.2">
    <molecule id="Q9GZU3-1"/>
    <property type="nucleotide sequence ID" value="NM_018056.4"/>
</dbReference>
<dbReference type="RefSeq" id="XP_011539986.1">
    <property type="nucleotide sequence ID" value="XM_011541684.2"/>
</dbReference>
<dbReference type="RefSeq" id="XP_047279807.1">
    <molecule id="Q9GZU3-4"/>
    <property type="nucleotide sequence ID" value="XM_047423851.1"/>
</dbReference>
<dbReference type="RefSeq" id="XP_054193313.1">
    <molecule id="Q9GZU3-4"/>
    <property type="nucleotide sequence ID" value="XM_054337338.1"/>
</dbReference>
<dbReference type="BioGRID" id="120425">
    <property type="interactions" value="38"/>
</dbReference>
<dbReference type="FunCoup" id="Q9GZU3">
    <property type="interactions" value="895"/>
</dbReference>
<dbReference type="IntAct" id="Q9GZU3">
    <property type="interactions" value="35"/>
</dbReference>
<dbReference type="STRING" id="9606.ENSP00000338165"/>
<dbReference type="GlyCosmos" id="Q9GZU3">
    <property type="glycosylation" value="1 site, No reported glycans"/>
</dbReference>
<dbReference type="GlyGen" id="Q9GZU3">
    <property type="glycosylation" value="1 site"/>
</dbReference>
<dbReference type="iPTMnet" id="Q9GZU3"/>
<dbReference type="PhosphoSitePlus" id="Q9GZU3"/>
<dbReference type="BioMuta" id="TMEM39B"/>
<dbReference type="DMDM" id="74752540"/>
<dbReference type="jPOST" id="Q9GZU3"/>
<dbReference type="MassIVE" id="Q9GZU3"/>
<dbReference type="PaxDb" id="9606-ENSP00000338165"/>
<dbReference type="PeptideAtlas" id="Q9GZU3"/>
<dbReference type="ProteomicsDB" id="4475"/>
<dbReference type="ProteomicsDB" id="4863"/>
<dbReference type="ProteomicsDB" id="5118"/>
<dbReference type="ProteomicsDB" id="80148">
    <molecule id="Q9GZU3-1"/>
</dbReference>
<dbReference type="Antibodypedia" id="52402">
    <property type="antibodies" value="27 antibodies from 10 providers"/>
</dbReference>
<dbReference type="DNASU" id="55116"/>
<dbReference type="Ensembl" id="ENST00000336294.10">
    <molecule id="Q9GZU3-1"/>
    <property type="protein sequence ID" value="ENSP00000338165.5"/>
    <property type="gene ID" value="ENSG00000121775.18"/>
</dbReference>
<dbReference type="GeneID" id="55116"/>
<dbReference type="KEGG" id="hsa:55116"/>
<dbReference type="MANE-Select" id="ENST00000336294.10">
    <property type="protein sequence ID" value="ENSP00000338165.5"/>
    <property type="RefSeq nucleotide sequence ID" value="NM_018056.4"/>
    <property type="RefSeq protein sequence ID" value="NP_060526.2"/>
</dbReference>
<dbReference type="UCSC" id="uc010ogv.3">
    <molecule id="Q9GZU3-1"/>
    <property type="organism name" value="human"/>
</dbReference>
<dbReference type="AGR" id="HGNC:25510"/>
<dbReference type="CTD" id="55116"/>
<dbReference type="DisGeNET" id="55116"/>
<dbReference type="GeneCards" id="TMEM39B"/>
<dbReference type="HGNC" id="HGNC:25510">
    <property type="gene designation" value="TMEM39B"/>
</dbReference>
<dbReference type="HPA" id="ENSG00000121775">
    <property type="expression patterns" value="Low tissue specificity"/>
</dbReference>
<dbReference type="neXtProt" id="NX_Q9GZU3"/>
<dbReference type="OpenTargets" id="ENSG00000121775"/>
<dbReference type="PharmGKB" id="PA134933688"/>
<dbReference type="VEuPathDB" id="HostDB:ENSG00000121775"/>
<dbReference type="eggNOG" id="KOG3828">
    <property type="taxonomic scope" value="Eukaryota"/>
</dbReference>
<dbReference type="GeneTree" id="ENSGT00390000018895"/>
<dbReference type="HOGENOM" id="CLU_028992_2_0_1"/>
<dbReference type="InParanoid" id="Q9GZU3"/>
<dbReference type="OMA" id="WYQTISL"/>
<dbReference type="OrthoDB" id="438179at2759"/>
<dbReference type="PAN-GO" id="Q9GZU3">
    <property type="GO annotations" value="1 GO annotation based on evolutionary models"/>
</dbReference>
<dbReference type="PhylomeDB" id="Q9GZU3"/>
<dbReference type="TreeFam" id="TF321110"/>
<dbReference type="PathwayCommons" id="Q9GZU3"/>
<dbReference type="SignaLink" id="Q9GZU3"/>
<dbReference type="BioGRID-ORCS" id="55116">
    <property type="hits" value="22 hits in 1168 CRISPR screens"/>
</dbReference>
<dbReference type="ChiTaRS" id="TMEM39B">
    <property type="organism name" value="human"/>
</dbReference>
<dbReference type="GenomeRNAi" id="55116"/>
<dbReference type="Pharos" id="Q9GZU3">
    <property type="development level" value="Tdark"/>
</dbReference>
<dbReference type="PRO" id="PR:Q9GZU3"/>
<dbReference type="Proteomes" id="UP000005640">
    <property type="component" value="Chromosome 1"/>
</dbReference>
<dbReference type="RNAct" id="Q9GZU3">
    <property type="molecule type" value="protein"/>
</dbReference>
<dbReference type="Bgee" id="ENSG00000121775">
    <property type="expression patterns" value="Expressed in primordial germ cell in gonad and 138 other cell types or tissues"/>
</dbReference>
<dbReference type="ExpressionAtlas" id="Q9GZU3">
    <property type="expression patterns" value="baseline and differential"/>
</dbReference>
<dbReference type="GO" id="GO:0005789">
    <property type="term" value="C:endoplasmic reticulum membrane"/>
    <property type="evidence" value="ECO:0000250"/>
    <property type="project" value="UniProtKB"/>
</dbReference>
<dbReference type="GO" id="GO:0016020">
    <property type="term" value="C:membrane"/>
    <property type="evidence" value="ECO:0000318"/>
    <property type="project" value="GO_Central"/>
</dbReference>
<dbReference type="InterPro" id="IPR019397">
    <property type="entry name" value="Uncharacterised_TMEM39"/>
</dbReference>
<dbReference type="PANTHER" id="PTHR12995">
    <property type="entry name" value="FI21814P1"/>
    <property type="match status" value="1"/>
</dbReference>
<dbReference type="PANTHER" id="PTHR12995:SF2">
    <property type="entry name" value="TRANSMEMBRANE PROTEIN 39B"/>
    <property type="match status" value="1"/>
</dbReference>
<dbReference type="Pfam" id="PF10271">
    <property type="entry name" value="Tmp39"/>
    <property type="match status" value="1"/>
</dbReference>
<protein>
    <recommendedName>
        <fullName evidence="5">Transmembrane protein 39B</fullName>
    </recommendedName>
</protein>
<gene>
    <name evidence="6" type="primary">TMEM39B</name>
</gene>
<sequence>MGGRRGPNRTSYCRNPLCEPGSSGGSSGSHTSSASVTSVRSRTRSSSGTGLSSPPLATQTVVPLQHCKIPELPVQASILFELQLFFCQLIALFVHYINIYKTVWWYPPSHPPSHTSLNFHLIDFNLLMVTTIVLGRRFIGSIVKEASQRGKVSLFRSILLFLTRFTVLTATGWSLCRSLIHLFRTYSFLNLLFLCYPFGMYIPFLQLNCDLRKTSLFNHMASMGPREAVSGLAKSRDYLLTLRETWKQHTRQLYGPDAMPTHACCLSPSLIRSEVEFLKMDFNWRMKEVLVSSMLSAYYVAFVPVWFVKNTHYYDKRWSCELFLLVSISTSVILMQHLLPASYCDLLHKAAAHLGCWQKVDPALCSNVLQHPWTEECMWPQGVLVKHSKNVYKAVGHYNVAIPSDVSHFRFHFFFSKPLRILNILLLLEGAVIVYQLYSLMSSEKWHQTISLALILFSNYYAFFKLLRDRLVLGKAYSYSASPQRDLDHRFS</sequence>
<feature type="chain" id="PRO_0000279232" description="Transmembrane protein 39B">
    <location>
        <begin position="1"/>
        <end position="492"/>
    </location>
</feature>
<feature type="transmembrane region" description="Helical" evidence="2">
    <location>
        <begin position="77"/>
        <end position="97"/>
    </location>
</feature>
<feature type="transmembrane region" description="Helical" evidence="2">
    <location>
        <begin position="115"/>
        <end position="135"/>
    </location>
</feature>
<feature type="transmembrane region" description="Helical" evidence="2">
    <location>
        <begin position="153"/>
        <end position="175"/>
    </location>
</feature>
<feature type="transmembrane region" description="Helical" evidence="2">
    <location>
        <begin position="185"/>
        <end position="205"/>
    </location>
</feature>
<feature type="transmembrane region" description="Helical" evidence="2">
    <location>
        <begin position="288"/>
        <end position="308"/>
    </location>
</feature>
<feature type="transmembrane region" description="Helical" evidence="2">
    <location>
        <begin position="322"/>
        <end position="342"/>
    </location>
</feature>
<feature type="transmembrane region" description="Helical" evidence="2">
    <location>
        <begin position="421"/>
        <end position="441"/>
    </location>
</feature>
<feature type="transmembrane region" description="Helical" evidence="2">
    <location>
        <begin position="447"/>
        <end position="467"/>
    </location>
</feature>
<feature type="region of interest" description="Disordered" evidence="3">
    <location>
        <begin position="1"/>
        <end position="54"/>
    </location>
</feature>
<feature type="compositionally biased region" description="Low complexity" evidence="3">
    <location>
        <begin position="28"/>
        <end position="53"/>
    </location>
</feature>
<feature type="glycosylation site" description="N-linked (GlcNAc...) asparagine" evidence="2">
    <location>
        <position position="8"/>
    </location>
</feature>
<feature type="splice variant" id="VSP_056123" description="In isoform 4." evidence="4">
    <location>
        <begin position="1"/>
        <end position="199"/>
    </location>
</feature>
<feature type="splice variant" id="VSP_056124" description="In isoform 3." evidence="4">
    <original>MGGRRGPNRTSYCRNPLCEPGSSGGSSGSHTSSASVTSVRSRTRSSSGTGLSSPPLATQTVVPLQHCKIPELPVQASILFELQLFFCQLIALFVHYINIYKTVWWYPPSHPPSHTSL</original>
    <variation>MK</variation>
    <location>
        <begin position="1"/>
        <end position="117"/>
    </location>
</feature>
<feature type="splice variant" id="VSP_056125" description="In isoform 2." evidence="4">
    <original>ASQRGKVSLFRSILLFLTRFTVLTATGWSLCRSLIHLFRTYSFLNLLFLCYPFGMYIPFLQLNCDLRKTSLFNHMA</original>
    <variation>VWDVHSVPAAELRPPQDKPLQPHGLHGAPGGGQWPGKEPGLPPDTAGDVEAAHKTAVWPGRHAHPCLLPVTQPHPQ</variation>
    <location>
        <begin position="146"/>
        <end position="221"/>
    </location>
</feature>
<feature type="splice variant" id="VSP_056126" description="In isoform 2." evidence="4">
    <location>
        <begin position="222"/>
        <end position="492"/>
    </location>
</feature>
<feature type="splice variant" id="VSP_056127" description="In isoform 3." evidence="4">
    <original>FFFSKPLRILNILLLLEGAVIVYQLYSLMSSEKWHQTISLALILF</original>
    <variation>VSLLPGEGGLGPERVGGSAGQECDVIARESYFQYFPNPKEDSAHM</variation>
    <location>
        <begin position="413"/>
        <end position="457"/>
    </location>
</feature>
<feature type="splice variant" id="VSP_056128" description="In isoform 3." evidence="4">
    <location>
        <begin position="458"/>
        <end position="492"/>
    </location>
</feature>
<feature type="sequence conflict" description="In Ref. 3; CAG33592." evidence="5" ref="3">
    <original>L</original>
    <variation>P</variation>
    <location>
        <position position="72"/>
    </location>
</feature>
<organism>
    <name type="scientific">Homo sapiens</name>
    <name type="common">Human</name>
    <dbReference type="NCBI Taxonomy" id="9606"/>
    <lineage>
        <taxon>Eukaryota</taxon>
        <taxon>Metazoa</taxon>
        <taxon>Chordata</taxon>
        <taxon>Craniata</taxon>
        <taxon>Vertebrata</taxon>
        <taxon>Euteleostomi</taxon>
        <taxon>Mammalia</taxon>
        <taxon>Eutheria</taxon>
        <taxon>Euarchontoglires</taxon>
        <taxon>Primates</taxon>
        <taxon>Haplorrhini</taxon>
        <taxon>Catarrhini</taxon>
        <taxon>Hominidae</taxon>
        <taxon>Homo</taxon>
    </lineage>
</organism>
<keyword id="KW-0025">Alternative splicing</keyword>
<keyword id="KW-0256">Endoplasmic reticulum</keyword>
<keyword id="KW-0325">Glycoprotein</keyword>
<keyword id="KW-0472">Membrane</keyword>
<keyword id="KW-1267">Proteomics identification</keyword>
<keyword id="KW-1185">Reference proteome</keyword>
<keyword id="KW-0812">Transmembrane</keyword>
<keyword id="KW-1133">Transmembrane helix</keyword>
<reference key="1">
    <citation type="journal article" date="2004" name="Nat. Genet.">
        <title>Complete sequencing and characterization of 21,243 full-length human cDNAs.</title>
        <authorList>
            <person name="Ota T."/>
            <person name="Suzuki Y."/>
            <person name="Nishikawa T."/>
            <person name="Otsuki T."/>
            <person name="Sugiyama T."/>
            <person name="Irie R."/>
            <person name="Wakamatsu A."/>
            <person name="Hayashi K."/>
            <person name="Sato H."/>
            <person name="Nagai K."/>
            <person name="Kimura K."/>
            <person name="Makita H."/>
            <person name="Sekine M."/>
            <person name="Obayashi M."/>
            <person name="Nishi T."/>
            <person name="Shibahara T."/>
            <person name="Tanaka T."/>
            <person name="Ishii S."/>
            <person name="Yamamoto J."/>
            <person name="Saito K."/>
            <person name="Kawai Y."/>
            <person name="Isono Y."/>
            <person name="Nakamura Y."/>
            <person name="Nagahari K."/>
            <person name="Murakami K."/>
            <person name="Yasuda T."/>
            <person name="Iwayanagi T."/>
            <person name="Wagatsuma M."/>
            <person name="Shiratori A."/>
            <person name="Sudo H."/>
            <person name="Hosoiri T."/>
            <person name="Kaku Y."/>
            <person name="Kodaira H."/>
            <person name="Kondo H."/>
            <person name="Sugawara M."/>
            <person name="Takahashi M."/>
            <person name="Kanda K."/>
            <person name="Yokoi T."/>
            <person name="Furuya T."/>
            <person name="Kikkawa E."/>
            <person name="Omura Y."/>
            <person name="Abe K."/>
            <person name="Kamihara K."/>
            <person name="Katsuta N."/>
            <person name="Sato K."/>
            <person name="Tanikawa M."/>
            <person name="Yamazaki M."/>
            <person name="Ninomiya K."/>
            <person name="Ishibashi T."/>
            <person name="Yamashita H."/>
            <person name="Murakawa K."/>
            <person name="Fujimori K."/>
            <person name="Tanai H."/>
            <person name="Kimata M."/>
            <person name="Watanabe M."/>
            <person name="Hiraoka S."/>
            <person name="Chiba Y."/>
            <person name="Ishida S."/>
            <person name="Ono Y."/>
            <person name="Takiguchi S."/>
            <person name="Watanabe S."/>
            <person name="Yosida M."/>
            <person name="Hotuta T."/>
            <person name="Kusano J."/>
            <person name="Kanehori K."/>
            <person name="Takahashi-Fujii A."/>
            <person name="Hara H."/>
            <person name="Tanase T.-O."/>
            <person name="Nomura Y."/>
            <person name="Togiya S."/>
            <person name="Komai F."/>
            <person name="Hara R."/>
            <person name="Takeuchi K."/>
            <person name="Arita M."/>
            <person name="Imose N."/>
            <person name="Musashino K."/>
            <person name="Yuuki H."/>
            <person name="Oshima A."/>
            <person name="Sasaki N."/>
            <person name="Aotsuka S."/>
            <person name="Yoshikawa Y."/>
            <person name="Matsunawa H."/>
            <person name="Ichihara T."/>
            <person name="Shiohata N."/>
            <person name="Sano S."/>
            <person name="Moriya S."/>
            <person name="Momiyama H."/>
            <person name="Satoh N."/>
            <person name="Takami S."/>
            <person name="Terashima Y."/>
            <person name="Suzuki O."/>
            <person name="Nakagawa S."/>
            <person name="Senoh A."/>
            <person name="Mizoguchi H."/>
            <person name="Goto Y."/>
            <person name="Shimizu F."/>
            <person name="Wakebe H."/>
            <person name="Hishigaki H."/>
            <person name="Watanabe T."/>
            <person name="Sugiyama A."/>
            <person name="Takemoto M."/>
            <person name="Kawakami B."/>
            <person name="Yamazaki M."/>
            <person name="Watanabe K."/>
            <person name="Kumagai A."/>
            <person name="Itakura S."/>
            <person name="Fukuzumi Y."/>
            <person name="Fujimori Y."/>
            <person name="Komiyama M."/>
            <person name="Tashiro H."/>
            <person name="Tanigami A."/>
            <person name="Fujiwara T."/>
            <person name="Ono T."/>
            <person name="Yamada K."/>
            <person name="Fujii Y."/>
            <person name="Ozaki K."/>
            <person name="Hirao M."/>
            <person name="Ohmori Y."/>
            <person name="Kawabata A."/>
            <person name="Hikiji T."/>
            <person name="Kobatake N."/>
            <person name="Inagaki H."/>
            <person name="Ikema Y."/>
            <person name="Okamoto S."/>
            <person name="Okitani R."/>
            <person name="Kawakami T."/>
            <person name="Noguchi S."/>
            <person name="Itoh T."/>
            <person name="Shigeta K."/>
            <person name="Senba T."/>
            <person name="Matsumura K."/>
            <person name="Nakajima Y."/>
            <person name="Mizuno T."/>
            <person name="Morinaga M."/>
            <person name="Sasaki M."/>
            <person name="Togashi T."/>
            <person name="Oyama M."/>
            <person name="Hata H."/>
            <person name="Watanabe M."/>
            <person name="Komatsu T."/>
            <person name="Mizushima-Sugano J."/>
            <person name="Satoh T."/>
            <person name="Shirai Y."/>
            <person name="Takahashi Y."/>
            <person name="Nakagawa K."/>
            <person name="Okumura K."/>
            <person name="Nagase T."/>
            <person name="Nomura N."/>
            <person name="Kikuchi H."/>
            <person name="Masuho Y."/>
            <person name="Yamashita R."/>
            <person name="Nakai K."/>
            <person name="Yada T."/>
            <person name="Nakamura Y."/>
            <person name="Ohara O."/>
            <person name="Isogai T."/>
            <person name="Sugano S."/>
        </authorList>
    </citation>
    <scope>NUCLEOTIDE SEQUENCE [LARGE SCALE MRNA] (ISOFORMS 1; 2; 3 AND 4)</scope>
    <source>
        <tissue>Colon</tissue>
        <tissue>Ovary</tissue>
        <tissue>Placenta</tissue>
    </source>
</reference>
<reference key="2">
    <citation type="journal article" date="2001" name="Genome Res.">
        <title>Towards a catalog of human genes and proteins: sequencing and analysis of 500 novel complete protein coding human cDNAs.</title>
        <authorList>
            <person name="Wiemann S."/>
            <person name="Weil B."/>
            <person name="Wellenreuther R."/>
            <person name="Gassenhuber J."/>
            <person name="Glassl S."/>
            <person name="Ansorge W."/>
            <person name="Boecher M."/>
            <person name="Bloecker H."/>
            <person name="Bauersachs S."/>
            <person name="Blum H."/>
            <person name="Lauber J."/>
            <person name="Duesterhoeft A."/>
            <person name="Beyer A."/>
            <person name="Koehrer K."/>
            <person name="Strack N."/>
            <person name="Mewes H.-W."/>
            <person name="Ottenwaelder B."/>
            <person name="Obermaier B."/>
            <person name="Tampe J."/>
            <person name="Heubner D."/>
            <person name="Wambutt R."/>
            <person name="Korn B."/>
            <person name="Klein M."/>
            <person name="Poustka A."/>
        </authorList>
    </citation>
    <scope>NUCLEOTIDE SEQUENCE [LARGE SCALE MRNA] (ISOFORM 1)</scope>
    <source>
        <tissue>Brain</tissue>
    </source>
</reference>
<reference key="3">
    <citation type="submission" date="2004-06" db="EMBL/GenBank/DDBJ databases">
        <title>Cloning of human full open reading frames in Gateway(TM) system entry vector (pDONR201).</title>
        <authorList>
            <person name="Ebert L."/>
            <person name="Schick M."/>
            <person name="Neubert P."/>
            <person name="Schatten R."/>
            <person name="Henze S."/>
            <person name="Korn B."/>
        </authorList>
    </citation>
    <scope>NUCLEOTIDE SEQUENCE [LARGE SCALE MRNA] (ISOFORM 1)</scope>
</reference>
<reference key="4">
    <citation type="journal article" date="2006" name="Nature">
        <title>The DNA sequence and biological annotation of human chromosome 1.</title>
        <authorList>
            <person name="Gregory S.G."/>
            <person name="Barlow K.F."/>
            <person name="McLay K.E."/>
            <person name="Kaul R."/>
            <person name="Swarbreck D."/>
            <person name="Dunham A."/>
            <person name="Scott C.E."/>
            <person name="Howe K.L."/>
            <person name="Woodfine K."/>
            <person name="Spencer C.C.A."/>
            <person name="Jones M.C."/>
            <person name="Gillson C."/>
            <person name="Searle S."/>
            <person name="Zhou Y."/>
            <person name="Kokocinski F."/>
            <person name="McDonald L."/>
            <person name="Evans R."/>
            <person name="Phillips K."/>
            <person name="Atkinson A."/>
            <person name="Cooper R."/>
            <person name="Jones C."/>
            <person name="Hall R.E."/>
            <person name="Andrews T.D."/>
            <person name="Lloyd C."/>
            <person name="Ainscough R."/>
            <person name="Almeida J.P."/>
            <person name="Ambrose K.D."/>
            <person name="Anderson F."/>
            <person name="Andrew R.W."/>
            <person name="Ashwell R.I.S."/>
            <person name="Aubin K."/>
            <person name="Babbage A.K."/>
            <person name="Bagguley C.L."/>
            <person name="Bailey J."/>
            <person name="Beasley H."/>
            <person name="Bethel G."/>
            <person name="Bird C.P."/>
            <person name="Bray-Allen S."/>
            <person name="Brown J.Y."/>
            <person name="Brown A.J."/>
            <person name="Buckley D."/>
            <person name="Burton J."/>
            <person name="Bye J."/>
            <person name="Carder C."/>
            <person name="Chapman J.C."/>
            <person name="Clark S.Y."/>
            <person name="Clarke G."/>
            <person name="Clee C."/>
            <person name="Cobley V."/>
            <person name="Collier R.E."/>
            <person name="Corby N."/>
            <person name="Coville G.J."/>
            <person name="Davies J."/>
            <person name="Deadman R."/>
            <person name="Dunn M."/>
            <person name="Earthrowl M."/>
            <person name="Ellington A.G."/>
            <person name="Errington H."/>
            <person name="Frankish A."/>
            <person name="Frankland J."/>
            <person name="French L."/>
            <person name="Garner P."/>
            <person name="Garnett J."/>
            <person name="Gay L."/>
            <person name="Ghori M.R.J."/>
            <person name="Gibson R."/>
            <person name="Gilby L.M."/>
            <person name="Gillett W."/>
            <person name="Glithero R.J."/>
            <person name="Grafham D.V."/>
            <person name="Griffiths C."/>
            <person name="Griffiths-Jones S."/>
            <person name="Grocock R."/>
            <person name="Hammond S."/>
            <person name="Harrison E.S.I."/>
            <person name="Hart E."/>
            <person name="Haugen E."/>
            <person name="Heath P.D."/>
            <person name="Holmes S."/>
            <person name="Holt K."/>
            <person name="Howden P.J."/>
            <person name="Hunt A.R."/>
            <person name="Hunt S.E."/>
            <person name="Hunter G."/>
            <person name="Isherwood J."/>
            <person name="James R."/>
            <person name="Johnson C."/>
            <person name="Johnson D."/>
            <person name="Joy A."/>
            <person name="Kay M."/>
            <person name="Kershaw J.K."/>
            <person name="Kibukawa M."/>
            <person name="Kimberley A.M."/>
            <person name="King A."/>
            <person name="Knights A.J."/>
            <person name="Lad H."/>
            <person name="Laird G."/>
            <person name="Lawlor S."/>
            <person name="Leongamornlert D.A."/>
            <person name="Lloyd D.M."/>
            <person name="Loveland J."/>
            <person name="Lovell J."/>
            <person name="Lush M.J."/>
            <person name="Lyne R."/>
            <person name="Martin S."/>
            <person name="Mashreghi-Mohammadi M."/>
            <person name="Matthews L."/>
            <person name="Matthews N.S.W."/>
            <person name="McLaren S."/>
            <person name="Milne S."/>
            <person name="Mistry S."/>
            <person name="Moore M.J.F."/>
            <person name="Nickerson T."/>
            <person name="O'Dell C.N."/>
            <person name="Oliver K."/>
            <person name="Palmeiri A."/>
            <person name="Palmer S.A."/>
            <person name="Parker A."/>
            <person name="Patel D."/>
            <person name="Pearce A.V."/>
            <person name="Peck A.I."/>
            <person name="Pelan S."/>
            <person name="Phelps K."/>
            <person name="Phillimore B.J."/>
            <person name="Plumb R."/>
            <person name="Rajan J."/>
            <person name="Raymond C."/>
            <person name="Rouse G."/>
            <person name="Saenphimmachak C."/>
            <person name="Sehra H.K."/>
            <person name="Sheridan E."/>
            <person name="Shownkeen R."/>
            <person name="Sims S."/>
            <person name="Skuce C.D."/>
            <person name="Smith M."/>
            <person name="Steward C."/>
            <person name="Subramanian S."/>
            <person name="Sycamore N."/>
            <person name="Tracey A."/>
            <person name="Tromans A."/>
            <person name="Van Helmond Z."/>
            <person name="Wall M."/>
            <person name="Wallis J.M."/>
            <person name="White S."/>
            <person name="Whitehead S.L."/>
            <person name="Wilkinson J.E."/>
            <person name="Willey D.L."/>
            <person name="Williams H."/>
            <person name="Wilming L."/>
            <person name="Wray P.W."/>
            <person name="Wu Z."/>
            <person name="Coulson A."/>
            <person name="Vaudin M."/>
            <person name="Sulston J.E."/>
            <person name="Durbin R.M."/>
            <person name="Hubbard T."/>
            <person name="Wooster R."/>
            <person name="Dunham I."/>
            <person name="Carter N.P."/>
            <person name="McVean G."/>
            <person name="Ross M.T."/>
            <person name="Harrow J."/>
            <person name="Olson M.V."/>
            <person name="Beck S."/>
            <person name="Rogers J."/>
            <person name="Bentley D.R."/>
        </authorList>
    </citation>
    <scope>NUCLEOTIDE SEQUENCE [LARGE SCALE GENOMIC DNA]</scope>
</reference>
<reference key="5">
    <citation type="submission" date="2005-09" db="EMBL/GenBank/DDBJ databases">
        <authorList>
            <person name="Mural R.J."/>
            <person name="Istrail S."/>
            <person name="Sutton G.G."/>
            <person name="Florea L."/>
            <person name="Halpern A.L."/>
            <person name="Mobarry C.M."/>
            <person name="Lippert R."/>
            <person name="Walenz B."/>
            <person name="Shatkay H."/>
            <person name="Dew I."/>
            <person name="Miller J.R."/>
            <person name="Flanigan M.J."/>
            <person name="Edwards N.J."/>
            <person name="Bolanos R."/>
            <person name="Fasulo D."/>
            <person name="Halldorsson B.V."/>
            <person name="Hannenhalli S."/>
            <person name="Turner R."/>
            <person name="Yooseph S."/>
            <person name="Lu F."/>
            <person name="Nusskern D.R."/>
            <person name="Shue B.C."/>
            <person name="Zheng X.H."/>
            <person name="Zhong F."/>
            <person name="Delcher A.L."/>
            <person name="Huson D.H."/>
            <person name="Kravitz S.A."/>
            <person name="Mouchard L."/>
            <person name="Reinert K."/>
            <person name="Remington K.A."/>
            <person name="Clark A.G."/>
            <person name="Waterman M.S."/>
            <person name="Eichler E.E."/>
            <person name="Adams M.D."/>
            <person name="Hunkapiller M.W."/>
            <person name="Myers E.W."/>
            <person name="Venter J.C."/>
        </authorList>
    </citation>
    <scope>NUCLEOTIDE SEQUENCE [LARGE SCALE GENOMIC DNA]</scope>
</reference>
<reference key="6">
    <citation type="journal article" date="2013" name="J. Proteome Res.">
        <title>Toward a comprehensive characterization of a human cancer cell phosphoproteome.</title>
        <authorList>
            <person name="Zhou H."/>
            <person name="Di Palma S."/>
            <person name="Preisinger C."/>
            <person name="Peng M."/>
            <person name="Polat A.N."/>
            <person name="Heck A.J."/>
            <person name="Mohammed S."/>
        </authorList>
    </citation>
    <scope>IDENTIFICATION BY MASS SPECTROMETRY [LARGE SCALE ANALYSIS]</scope>
    <source>
        <tissue>Erythroleukemia</tissue>
    </source>
</reference>
<accession>Q9GZU3</accession>
<accession>B4DKN8</accession>
<accession>B4DQE6</accession>
<accession>B4DTN8</accession>
<accession>D3DPP4</accession>
<accession>Q6IA44</accession>
<comment type="function">
    <text evidence="1">May protect the cells against DNA damage caused by exposure to the cold-warming stress and facilitates tissue damage repair during the recovery phase.</text>
</comment>
<comment type="interaction">
    <interactant intactId="EBI-17572471">
        <id>Q9GZU3-4</id>
    </interactant>
    <interactant intactId="EBI-716063">
        <id>Q13113</id>
        <label>PDZK1IP1</label>
    </interactant>
    <organismsDiffer>false</organismsDiffer>
    <experiments>3</experiments>
</comment>
<comment type="subcellular location">
    <subcellularLocation>
        <location evidence="1">Endoplasmic reticulum membrane</location>
        <topology evidence="2">Multi-pass membrane protein</topology>
    </subcellularLocation>
</comment>
<comment type="alternative products">
    <event type="alternative splicing"/>
    <isoform>
        <id>Q9GZU3-1</id>
        <name>1</name>
        <sequence type="displayed"/>
    </isoform>
    <isoform>
        <id>Q9GZU3-2</id>
        <name>2</name>
        <sequence type="described" ref="VSP_056125 VSP_056126"/>
    </isoform>
    <isoform>
        <id>Q9GZU3-3</id>
        <name>3</name>
        <sequence type="described" ref="VSP_056124 VSP_056127 VSP_056128"/>
    </isoform>
    <isoform>
        <id>Q9GZU3-4</id>
        <name>4</name>
        <sequence type="described" ref="VSP_056123"/>
    </isoform>
</comment>
<comment type="similarity">
    <text evidence="5">Belongs to the TMEM39 family.</text>
</comment>
<evidence type="ECO:0000250" key="1">
    <source>
        <dbReference type="UniProtKB" id="Q7ZW11"/>
    </source>
</evidence>
<evidence type="ECO:0000255" key="2"/>
<evidence type="ECO:0000256" key="3">
    <source>
        <dbReference type="SAM" id="MobiDB-lite"/>
    </source>
</evidence>
<evidence type="ECO:0000303" key="4">
    <source>
    </source>
</evidence>
<evidence type="ECO:0000305" key="5"/>
<evidence type="ECO:0000312" key="6">
    <source>
        <dbReference type="HGNC" id="HGNC:25510"/>
    </source>
</evidence>
<name>TM39B_HUMAN</name>
<proteinExistence type="evidence at protein level"/>